<comment type="function">
    <text evidence="1 2">Catalyzes the cleavage of the glycosidic bond of 2'-deoxyribonucleosides and the transfer of the deoxyribosyl moiety to an acceptor purine or pyrimidine base.</text>
</comment>
<comment type="catalytic activity">
    <reaction evidence="1">
        <text>2-deoxy-D-ribosyl-base(1) + base(2) = 2-deoxy-D-ribosyl-base(2) + base(1).</text>
        <dbReference type="EC" id="2.4.2.6"/>
    </reaction>
</comment>
<comment type="biophysicochemical properties">
    <phDependence>
        <text>Optimum pH is 6.0.</text>
    </phDependence>
</comment>
<comment type="pathway">
    <text>Nucleotide metabolism; nucleotide salvage pathway.</text>
</comment>
<comment type="subunit">
    <text evidence="2">Homohexamer.</text>
</comment>
<comment type="similarity">
    <text evidence="3">Belongs to the nucleoside deoxyribosyltransferase family.</text>
</comment>
<comment type="caution">
    <text evidence="4">Was originally thought to originate from E.coli.</text>
</comment>
<reference evidence="3" key="1">
    <citation type="journal article" date="1995" name="J. Biol. Chem.">
        <title>Identification of the active site nucleophile in nucleoside 2-deoxyribosyltransferase as glutamic acid 98.</title>
        <authorList>
            <person name="Porter D.J.T."/>
            <person name="Merrill B.M."/>
            <person name="Short S.A."/>
        </authorList>
    </citation>
    <scope>NUCLEOTIDE SEQUENCE [GENOMIC DNA]</scope>
    <scope>PROTEIN SEQUENCE OF 2-26</scope>
    <scope>FUNCTION</scope>
    <scope>ACTIVE SITE</scope>
    <scope>MUTAGENESIS OF GLU-98</scope>
</reference>
<reference evidence="3" key="2">
    <citation type="journal article" date="1996" name="Structure">
        <title>Crystal structures of nucleoside 2-deoxyribosyltransferase in native and ligand-bound forms reveal architecture of the active site.</title>
        <authorList>
            <person name="Armstrong S.R."/>
            <person name="Cook W.J."/>
            <person name="Short S.A."/>
            <person name="Ealick S.E."/>
        </authorList>
    </citation>
    <scope>X-RAY CRYSTALLOGRAPHY (2.4 ANGSTROMS)</scope>
</reference>
<name>NTD_LACLE</name>
<keyword id="KW-0002">3D-structure</keyword>
<keyword id="KW-0903">Direct protein sequencing</keyword>
<keyword id="KW-0546">Nucleotide metabolism</keyword>
<keyword id="KW-0808">Transferase</keyword>
<feature type="initiator methionine" description="Removed" evidence="1">
    <location>
        <position position="1"/>
    </location>
</feature>
<feature type="chain" id="PRO_0000220067" description="Nucleoside deoxyribosyltransferase">
    <location>
        <begin position="2"/>
        <end position="157"/>
    </location>
</feature>
<feature type="active site" description="Nucleophile" evidence="1">
    <location>
        <position position="98"/>
    </location>
</feature>
<feature type="mutagenesis site" description="Loss of transferase activity." evidence="1">
    <original>E</original>
    <variation>A</variation>
    <location>
        <position position="98"/>
    </location>
</feature>
<feature type="strand" evidence="6">
    <location>
        <begin position="6"/>
        <end position="10"/>
    </location>
</feature>
<feature type="helix" evidence="6">
    <location>
        <begin position="15"/>
        <end position="29"/>
    </location>
</feature>
<feature type="helix" evidence="6">
    <location>
        <begin position="36"/>
        <end position="38"/>
    </location>
</feature>
<feature type="helix" evidence="6">
    <location>
        <begin position="42"/>
        <end position="44"/>
    </location>
</feature>
<feature type="helix" evidence="6">
    <location>
        <begin position="47"/>
        <end position="49"/>
    </location>
</feature>
<feature type="turn" evidence="6">
    <location>
        <begin position="52"/>
        <end position="54"/>
    </location>
</feature>
<feature type="helix" evidence="6">
    <location>
        <begin position="56"/>
        <end position="60"/>
    </location>
</feature>
<feature type="helix" evidence="6">
    <location>
        <begin position="62"/>
        <end position="77"/>
    </location>
</feature>
<feature type="strand" evidence="6">
    <location>
        <begin position="79"/>
        <end position="85"/>
    </location>
</feature>
<feature type="helix" evidence="5">
    <location>
        <begin position="88"/>
        <end position="90"/>
    </location>
</feature>
<feature type="helix" evidence="6">
    <location>
        <begin position="93"/>
        <end position="104"/>
    </location>
</feature>
<feature type="strand" evidence="6">
    <location>
        <begin position="108"/>
        <end position="113"/>
    </location>
</feature>
<feature type="turn" evidence="6">
    <location>
        <begin position="115"/>
        <end position="119"/>
    </location>
</feature>
<feature type="helix" evidence="6">
    <location>
        <begin position="124"/>
        <end position="129"/>
    </location>
</feature>
<feature type="strand" evidence="6">
    <location>
        <begin position="131"/>
        <end position="135"/>
    </location>
</feature>
<feature type="helix" evidence="6">
    <location>
        <begin position="136"/>
        <end position="141"/>
    </location>
</feature>
<organism evidence="3">
    <name type="scientific">Lactobacillus leichmannii</name>
    <dbReference type="NCBI Taxonomy" id="28039"/>
    <lineage>
        <taxon>Bacteria</taxon>
        <taxon>Bacillati</taxon>
        <taxon>Bacillota</taxon>
        <taxon>Bacilli</taxon>
        <taxon>Lactobacillales</taxon>
        <taxon>Lactobacillaceae</taxon>
        <taxon>Lactobacillus</taxon>
    </lineage>
</organism>
<dbReference type="EC" id="2.4.2.6"/>
<dbReference type="RefSeq" id="WP_035184009.1">
    <property type="nucleotide sequence ID" value="NZ_QOCY01000049.1"/>
</dbReference>
<dbReference type="PDB" id="1F8X">
    <property type="method" value="X-ray"/>
    <property type="resolution" value="2.50 A"/>
    <property type="chains" value="A/B=1-157"/>
</dbReference>
<dbReference type="PDB" id="1F8Y">
    <property type="method" value="X-ray"/>
    <property type="resolution" value="2.40 A"/>
    <property type="chains" value="A/B=1-157"/>
</dbReference>
<dbReference type="PDB" id="4HX9">
    <property type="method" value="X-ray"/>
    <property type="resolution" value="2.68 A"/>
    <property type="chains" value="A/B/C/D/E/F/G/H=1-157"/>
</dbReference>
<dbReference type="PDB" id="9EZK">
    <property type="method" value="X-ray"/>
    <property type="resolution" value="2.79 A"/>
    <property type="chains" value="A/B=1-157"/>
</dbReference>
<dbReference type="PDB" id="9F08">
    <property type="method" value="X-ray"/>
    <property type="resolution" value="2.37 A"/>
    <property type="chains" value="A/B=1-157"/>
</dbReference>
<dbReference type="PDB" id="9F09">
    <property type="method" value="X-ray"/>
    <property type="resolution" value="2.37 A"/>
    <property type="chains" value="A/B=1-157"/>
</dbReference>
<dbReference type="PDB" id="9GN2">
    <property type="method" value="X-ray"/>
    <property type="resolution" value="2.41 A"/>
    <property type="chains" value="A/B=1-157"/>
</dbReference>
<dbReference type="PDB" id="9GN4">
    <property type="method" value="X-ray"/>
    <property type="resolution" value="2.48 A"/>
    <property type="chains" value="A/B=1-157"/>
</dbReference>
<dbReference type="PDBsum" id="1F8X"/>
<dbReference type="PDBsum" id="1F8Y"/>
<dbReference type="PDBsum" id="4HX9"/>
<dbReference type="PDBsum" id="9EZK"/>
<dbReference type="PDBsum" id="9F08"/>
<dbReference type="PDBsum" id="9F09"/>
<dbReference type="PDBsum" id="9GN2"/>
<dbReference type="PDBsum" id="9GN4"/>
<dbReference type="SMR" id="Q9R5V5"/>
<dbReference type="DrugBank" id="DB03763">
    <property type="generic name" value="5-methyl-2'-deoxypseudouridine"/>
</dbReference>
<dbReference type="BRENDA" id="2.4.2.6">
    <property type="organism ID" value="2878"/>
</dbReference>
<dbReference type="UniPathway" id="UPA00312"/>
<dbReference type="EvolutionaryTrace" id="Q9R5V5"/>
<dbReference type="GO" id="GO:0050144">
    <property type="term" value="F:nucleoside deoxyribosyltransferase activity"/>
    <property type="evidence" value="ECO:0007669"/>
    <property type="project" value="UniProtKB-EC"/>
</dbReference>
<dbReference type="GO" id="GO:0043173">
    <property type="term" value="P:nucleotide salvage"/>
    <property type="evidence" value="ECO:0007669"/>
    <property type="project" value="UniProtKB-UniPathway"/>
</dbReference>
<dbReference type="Gene3D" id="3.40.50.450">
    <property type="match status" value="1"/>
</dbReference>
<dbReference type="InterPro" id="IPR007710">
    <property type="entry name" value="Nucleoside_deoxyribTrfase"/>
</dbReference>
<dbReference type="Pfam" id="PF05014">
    <property type="entry name" value="Nuc_deoxyrib_tr"/>
    <property type="match status" value="1"/>
</dbReference>
<dbReference type="SUPFAM" id="SSF52309">
    <property type="entry name" value="N-(deoxy)ribosyltransferase-like"/>
    <property type="match status" value="1"/>
</dbReference>
<gene>
    <name type="primary">ntd</name>
</gene>
<evidence type="ECO:0000269" key="1">
    <source>
    </source>
</evidence>
<evidence type="ECO:0000269" key="2">
    <source>
    </source>
</evidence>
<evidence type="ECO:0000305" key="3"/>
<evidence type="ECO:0000305" key="4">
    <source>
    </source>
</evidence>
<evidence type="ECO:0007829" key="5">
    <source>
        <dbReference type="PDB" id="1F8Y"/>
    </source>
</evidence>
<evidence type="ECO:0007829" key="6">
    <source>
        <dbReference type="PDB" id="9F08"/>
    </source>
</evidence>
<accession>Q9R5V5</accession>
<proteinExistence type="evidence at protein level"/>
<protein>
    <recommendedName>
        <fullName>Nucleoside deoxyribosyltransferase</fullName>
        <shortName>N-deoxyribosyltransferase</shortName>
        <ecNumber>2.4.2.6</ecNumber>
    </recommendedName>
</protein>
<sequence>MPKKTIYFGAGWFTDRQNKAYKEAMEALKENPTIDLENSYVPLDNQYKGIRVDEHPEYLHDKVWATATYNNDLNGIKTNDIMLGVYIPDEEDVGLGMELGYALSQGKYVLLVIPDEDYGKPINLMSWGVSDNVIKMSQLKDFNFNKPRFDFYEGAVY</sequence>